<name>GLK_RHIJ3</name>
<gene>
    <name evidence="1" type="primary">glk</name>
    <name type="ordered locus">RL0182</name>
</gene>
<sequence length="341" mass="36498">MSKPNNSTAPLPFPILIGDIGGTNARFSILTDAYAEPKQFPNVRTADFATIDEAIQQGVLDKTAVQPRSAILAVAGPINDDEIPLTNCDWVVRPKTMIEGLGMEDVLVVNDFEAQALAIAALSDENRERIGDATRDMIASRVVLGPGTGLGVGGLVHAQHSWIPVPGEGGHVDLGPRSKRDYDIFPHIETIEGRVSAEQILCGRGLVNLYHAICVVDGIEPTMKDPADITSHALAGSDKAAVETVSLFATYLGRVAGDLAMVFMARGGVYLSGGISQKIIPALKKPEFRIAFEDKAPHTALLRTIPTYVVTHPLAALAGLSSYARMPANFGVSTEGRRWRR</sequence>
<dbReference type="EC" id="2.7.1.2" evidence="1"/>
<dbReference type="EMBL" id="AM236080">
    <property type="protein sequence ID" value="CAK05671.1"/>
    <property type="molecule type" value="Genomic_DNA"/>
</dbReference>
<dbReference type="RefSeq" id="WP_011649995.1">
    <property type="nucleotide sequence ID" value="NC_008380.1"/>
</dbReference>
<dbReference type="SMR" id="Q1MMY1"/>
<dbReference type="EnsemblBacteria" id="CAK05671">
    <property type="protein sequence ID" value="CAK05671"/>
    <property type="gene ID" value="RL0182"/>
</dbReference>
<dbReference type="KEGG" id="rle:RL0182"/>
<dbReference type="eggNOG" id="COG0837">
    <property type="taxonomic scope" value="Bacteria"/>
</dbReference>
<dbReference type="HOGENOM" id="CLU_042582_1_0_5"/>
<dbReference type="Proteomes" id="UP000006575">
    <property type="component" value="Chromosome"/>
</dbReference>
<dbReference type="GO" id="GO:0005829">
    <property type="term" value="C:cytosol"/>
    <property type="evidence" value="ECO:0007669"/>
    <property type="project" value="TreeGrafter"/>
</dbReference>
<dbReference type="GO" id="GO:0005524">
    <property type="term" value="F:ATP binding"/>
    <property type="evidence" value="ECO:0007669"/>
    <property type="project" value="UniProtKB-UniRule"/>
</dbReference>
<dbReference type="GO" id="GO:0005536">
    <property type="term" value="F:D-glucose binding"/>
    <property type="evidence" value="ECO:0007669"/>
    <property type="project" value="InterPro"/>
</dbReference>
<dbReference type="GO" id="GO:0004340">
    <property type="term" value="F:glucokinase activity"/>
    <property type="evidence" value="ECO:0007669"/>
    <property type="project" value="UniProtKB-UniRule"/>
</dbReference>
<dbReference type="GO" id="GO:0006096">
    <property type="term" value="P:glycolytic process"/>
    <property type="evidence" value="ECO:0007669"/>
    <property type="project" value="UniProtKB-UniRule"/>
</dbReference>
<dbReference type="CDD" id="cd24008">
    <property type="entry name" value="ASKHA_NBD_GLK"/>
    <property type="match status" value="1"/>
</dbReference>
<dbReference type="Gene3D" id="3.30.420.40">
    <property type="match status" value="1"/>
</dbReference>
<dbReference type="Gene3D" id="3.40.367.20">
    <property type="match status" value="1"/>
</dbReference>
<dbReference type="HAMAP" id="MF_00524">
    <property type="entry name" value="Glucokinase"/>
    <property type="match status" value="1"/>
</dbReference>
<dbReference type="InterPro" id="IPR043129">
    <property type="entry name" value="ATPase_NBD"/>
</dbReference>
<dbReference type="InterPro" id="IPR050201">
    <property type="entry name" value="Bacterial_glucokinase"/>
</dbReference>
<dbReference type="InterPro" id="IPR003836">
    <property type="entry name" value="Glucokinase"/>
</dbReference>
<dbReference type="NCBIfam" id="TIGR00749">
    <property type="entry name" value="glk"/>
    <property type="match status" value="1"/>
</dbReference>
<dbReference type="NCBIfam" id="NF001417">
    <property type="entry name" value="PRK00292.1-4"/>
    <property type="match status" value="1"/>
</dbReference>
<dbReference type="PANTHER" id="PTHR47690">
    <property type="entry name" value="GLUCOKINASE"/>
    <property type="match status" value="1"/>
</dbReference>
<dbReference type="PANTHER" id="PTHR47690:SF1">
    <property type="entry name" value="GLUCOKINASE"/>
    <property type="match status" value="1"/>
</dbReference>
<dbReference type="Pfam" id="PF02685">
    <property type="entry name" value="Glucokinase"/>
    <property type="match status" value="1"/>
</dbReference>
<dbReference type="SUPFAM" id="SSF53067">
    <property type="entry name" value="Actin-like ATPase domain"/>
    <property type="match status" value="1"/>
</dbReference>
<reference key="1">
    <citation type="journal article" date="2006" name="Genome Biol.">
        <title>The genome of Rhizobium leguminosarum has recognizable core and accessory components.</title>
        <authorList>
            <person name="Young J.P.W."/>
            <person name="Crossman L.C."/>
            <person name="Johnston A.W.B."/>
            <person name="Thomson N.R."/>
            <person name="Ghazoui Z.F."/>
            <person name="Hull K.H."/>
            <person name="Wexler M."/>
            <person name="Curson A.R.J."/>
            <person name="Todd J.D."/>
            <person name="Poole P.S."/>
            <person name="Mauchline T.H."/>
            <person name="East A.K."/>
            <person name="Quail M.A."/>
            <person name="Churcher C."/>
            <person name="Arrowsmith C."/>
            <person name="Cherevach I."/>
            <person name="Chillingworth T."/>
            <person name="Clarke K."/>
            <person name="Cronin A."/>
            <person name="Davis P."/>
            <person name="Fraser A."/>
            <person name="Hance Z."/>
            <person name="Hauser H."/>
            <person name="Jagels K."/>
            <person name="Moule S."/>
            <person name="Mungall K."/>
            <person name="Norbertczak H."/>
            <person name="Rabbinowitsch E."/>
            <person name="Sanders M."/>
            <person name="Simmonds M."/>
            <person name="Whitehead S."/>
            <person name="Parkhill J."/>
        </authorList>
    </citation>
    <scope>NUCLEOTIDE SEQUENCE [LARGE SCALE GENOMIC DNA]</scope>
    <source>
        <strain>DSM 114642 / LMG 32736 / 3841</strain>
    </source>
</reference>
<accession>Q1MMY1</accession>
<organism>
    <name type="scientific">Rhizobium johnstonii (strain DSM 114642 / LMG 32736 / 3841)</name>
    <name type="common">Rhizobium leguminosarum bv. viciae</name>
    <dbReference type="NCBI Taxonomy" id="216596"/>
    <lineage>
        <taxon>Bacteria</taxon>
        <taxon>Pseudomonadati</taxon>
        <taxon>Pseudomonadota</taxon>
        <taxon>Alphaproteobacteria</taxon>
        <taxon>Hyphomicrobiales</taxon>
        <taxon>Rhizobiaceae</taxon>
        <taxon>Rhizobium/Agrobacterium group</taxon>
        <taxon>Rhizobium</taxon>
        <taxon>Rhizobium johnstonii</taxon>
    </lineage>
</organism>
<keyword id="KW-0067">ATP-binding</keyword>
<keyword id="KW-0963">Cytoplasm</keyword>
<keyword id="KW-0324">Glycolysis</keyword>
<keyword id="KW-0418">Kinase</keyword>
<keyword id="KW-0547">Nucleotide-binding</keyword>
<keyword id="KW-0808">Transferase</keyword>
<evidence type="ECO:0000255" key="1">
    <source>
        <dbReference type="HAMAP-Rule" id="MF_00524"/>
    </source>
</evidence>
<proteinExistence type="inferred from homology"/>
<feature type="chain" id="PRO_0000268783" description="Glucokinase">
    <location>
        <begin position="1"/>
        <end position="341"/>
    </location>
</feature>
<feature type="binding site" evidence="1">
    <location>
        <begin position="18"/>
        <end position="23"/>
    </location>
    <ligand>
        <name>ATP</name>
        <dbReference type="ChEBI" id="CHEBI:30616"/>
    </ligand>
</feature>
<protein>
    <recommendedName>
        <fullName evidence="1">Glucokinase</fullName>
        <ecNumber evidence="1">2.7.1.2</ecNumber>
    </recommendedName>
    <alternativeName>
        <fullName evidence="1">Glucose kinase</fullName>
    </alternativeName>
</protein>
<comment type="catalytic activity">
    <reaction evidence="1">
        <text>D-glucose + ATP = D-glucose 6-phosphate + ADP + H(+)</text>
        <dbReference type="Rhea" id="RHEA:17825"/>
        <dbReference type="ChEBI" id="CHEBI:4167"/>
        <dbReference type="ChEBI" id="CHEBI:15378"/>
        <dbReference type="ChEBI" id="CHEBI:30616"/>
        <dbReference type="ChEBI" id="CHEBI:61548"/>
        <dbReference type="ChEBI" id="CHEBI:456216"/>
        <dbReference type="EC" id="2.7.1.2"/>
    </reaction>
</comment>
<comment type="subcellular location">
    <subcellularLocation>
        <location evidence="1">Cytoplasm</location>
    </subcellularLocation>
</comment>
<comment type="similarity">
    <text evidence="1">Belongs to the bacterial glucokinase family.</text>
</comment>